<accession>P62477</accession>
<sequence length="315" mass="35696">MQPVHTSVLLEECLEFLKPDASDNLFVDGTLGEGGHTEAFLKRYPQLNAIGVDADVSIQERAKERLKPFGERIRFHLGWSDEFFKNYPKDFAPPNLILLDLGISMFHYVKSGRGFSFSSDEPLDMRLNPELRLSAADIVNSYNEKDLADLIFNYGEERYSRKIASRIVEQRAAAAFSNAKELADCIYKAVPQNYRHGKIHPATKTFQALRIAVNGELDRLPRLLEAAFSVLAPNGRLGLITFHSLEDRIVKFYFKELGKSCTCPENMPICKCGGRPRAEVLTKKAVKASDEEIRLNPPSRSARLRVVRKIDYRES</sequence>
<dbReference type="EC" id="2.1.1.199" evidence="1"/>
<dbReference type="EMBL" id="AE017226">
    <property type="protein sequence ID" value="AAS11716.1"/>
    <property type="molecule type" value="Genomic_DNA"/>
</dbReference>
<dbReference type="RefSeq" id="NP_971805.1">
    <property type="nucleotide sequence ID" value="NC_002967.9"/>
</dbReference>
<dbReference type="RefSeq" id="WP_002678681.1">
    <property type="nucleotide sequence ID" value="NC_002967.9"/>
</dbReference>
<dbReference type="SMR" id="P62477"/>
<dbReference type="STRING" id="243275.TDE_1198"/>
<dbReference type="PaxDb" id="243275-TDE_1198"/>
<dbReference type="GeneID" id="2741159"/>
<dbReference type="KEGG" id="tde:TDE_1198"/>
<dbReference type="PATRIC" id="fig|243275.7.peg.1153"/>
<dbReference type="eggNOG" id="COG0275">
    <property type="taxonomic scope" value="Bacteria"/>
</dbReference>
<dbReference type="HOGENOM" id="CLU_038422_2_0_12"/>
<dbReference type="OrthoDB" id="9806637at2"/>
<dbReference type="Proteomes" id="UP000008212">
    <property type="component" value="Chromosome"/>
</dbReference>
<dbReference type="GO" id="GO:0005737">
    <property type="term" value="C:cytoplasm"/>
    <property type="evidence" value="ECO:0007669"/>
    <property type="project" value="UniProtKB-SubCell"/>
</dbReference>
<dbReference type="GO" id="GO:0071424">
    <property type="term" value="F:rRNA (cytosine-N4-)-methyltransferase activity"/>
    <property type="evidence" value="ECO:0007669"/>
    <property type="project" value="UniProtKB-UniRule"/>
</dbReference>
<dbReference type="GO" id="GO:0070475">
    <property type="term" value="P:rRNA base methylation"/>
    <property type="evidence" value="ECO:0007669"/>
    <property type="project" value="UniProtKB-UniRule"/>
</dbReference>
<dbReference type="FunFam" id="1.10.150.170:FF:000003">
    <property type="entry name" value="Ribosomal RNA small subunit methyltransferase H"/>
    <property type="match status" value="1"/>
</dbReference>
<dbReference type="Gene3D" id="1.10.150.170">
    <property type="entry name" value="Putative methyltransferase TM0872, insert domain"/>
    <property type="match status" value="1"/>
</dbReference>
<dbReference type="Gene3D" id="3.40.50.150">
    <property type="entry name" value="Vaccinia Virus protein VP39"/>
    <property type="match status" value="1"/>
</dbReference>
<dbReference type="HAMAP" id="MF_01007">
    <property type="entry name" value="16SrRNA_methyltr_H"/>
    <property type="match status" value="1"/>
</dbReference>
<dbReference type="InterPro" id="IPR002903">
    <property type="entry name" value="RsmH"/>
</dbReference>
<dbReference type="InterPro" id="IPR023397">
    <property type="entry name" value="SAM-dep_MeTrfase_MraW_recog"/>
</dbReference>
<dbReference type="InterPro" id="IPR029063">
    <property type="entry name" value="SAM-dependent_MTases_sf"/>
</dbReference>
<dbReference type="NCBIfam" id="TIGR00006">
    <property type="entry name" value="16S rRNA (cytosine(1402)-N(4))-methyltransferase RsmH"/>
    <property type="match status" value="1"/>
</dbReference>
<dbReference type="PANTHER" id="PTHR11265:SF0">
    <property type="entry name" value="12S RRNA N4-METHYLCYTIDINE METHYLTRANSFERASE"/>
    <property type="match status" value="1"/>
</dbReference>
<dbReference type="PANTHER" id="PTHR11265">
    <property type="entry name" value="S-ADENOSYL-METHYLTRANSFERASE MRAW"/>
    <property type="match status" value="1"/>
</dbReference>
<dbReference type="Pfam" id="PF01795">
    <property type="entry name" value="Methyltransf_5"/>
    <property type="match status" value="1"/>
</dbReference>
<dbReference type="PIRSF" id="PIRSF004486">
    <property type="entry name" value="MraW"/>
    <property type="match status" value="1"/>
</dbReference>
<dbReference type="SUPFAM" id="SSF81799">
    <property type="entry name" value="Putative methyltransferase TM0872, insert domain"/>
    <property type="match status" value="1"/>
</dbReference>
<dbReference type="SUPFAM" id="SSF53335">
    <property type="entry name" value="S-adenosyl-L-methionine-dependent methyltransferases"/>
    <property type="match status" value="1"/>
</dbReference>
<organism>
    <name type="scientific">Treponema denticola (strain ATCC 35405 / DSM 14222 / CIP 103919 / JCM 8153 / KCTC 15104)</name>
    <dbReference type="NCBI Taxonomy" id="243275"/>
    <lineage>
        <taxon>Bacteria</taxon>
        <taxon>Pseudomonadati</taxon>
        <taxon>Spirochaetota</taxon>
        <taxon>Spirochaetia</taxon>
        <taxon>Spirochaetales</taxon>
        <taxon>Treponemataceae</taxon>
        <taxon>Treponema</taxon>
    </lineage>
</organism>
<name>RSMH_TREDE</name>
<evidence type="ECO:0000255" key="1">
    <source>
        <dbReference type="HAMAP-Rule" id="MF_01007"/>
    </source>
</evidence>
<protein>
    <recommendedName>
        <fullName evidence="1">Ribosomal RNA small subunit methyltransferase H</fullName>
        <ecNumber evidence="1">2.1.1.199</ecNumber>
    </recommendedName>
    <alternativeName>
        <fullName evidence="1">16S rRNA m(4)C1402 methyltransferase</fullName>
    </alternativeName>
    <alternativeName>
        <fullName evidence="1">rRNA (cytosine-N(4)-)-methyltransferase RsmH</fullName>
    </alternativeName>
</protein>
<comment type="function">
    <text evidence="1">Specifically methylates the N4 position of cytidine in position 1402 (C1402) of 16S rRNA.</text>
</comment>
<comment type="catalytic activity">
    <reaction evidence="1">
        <text>cytidine(1402) in 16S rRNA + S-adenosyl-L-methionine = N(4)-methylcytidine(1402) in 16S rRNA + S-adenosyl-L-homocysteine + H(+)</text>
        <dbReference type="Rhea" id="RHEA:42928"/>
        <dbReference type="Rhea" id="RHEA-COMP:10286"/>
        <dbReference type="Rhea" id="RHEA-COMP:10287"/>
        <dbReference type="ChEBI" id="CHEBI:15378"/>
        <dbReference type="ChEBI" id="CHEBI:57856"/>
        <dbReference type="ChEBI" id="CHEBI:59789"/>
        <dbReference type="ChEBI" id="CHEBI:74506"/>
        <dbReference type="ChEBI" id="CHEBI:82748"/>
        <dbReference type="EC" id="2.1.1.199"/>
    </reaction>
</comment>
<comment type="subcellular location">
    <subcellularLocation>
        <location evidence="1">Cytoplasm</location>
    </subcellularLocation>
</comment>
<comment type="similarity">
    <text evidence="1">Belongs to the methyltransferase superfamily. RsmH family.</text>
</comment>
<gene>
    <name evidence="1" type="primary">rsmH</name>
    <name type="synonym">mraW</name>
    <name type="ordered locus">TDE_1198</name>
</gene>
<reference key="1">
    <citation type="journal article" date="2004" name="Proc. Natl. Acad. Sci. U.S.A.">
        <title>Comparison of the genome of the oral pathogen Treponema denticola with other spirochete genomes.</title>
        <authorList>
            <person name="Seshadri R."/>
            <person name="Myers G.S.A."/>
            <person name="Tettelin H."/>
            <person name="Eisen J.A."/>
            <person name="Heidelberg J.F."/>
            <person name="Dodson R.J."/>
            <person name="Davidsen T.M."/>
            <person name="DeBoy R.T."/>
            <person name="Fouts D.E."/>
            <person name="Haft D.H."/>
            <person name="Selengut J."/>
            <person name="Ren Q."/>
            <person name="Brinkac L.M."/>
            <person name="Madupu R."/>
            <person name="Kolonay J.F."/>
            <person name="Durkin S.A."/>
            <person name="Daugherty S.C."/>
            <person name="Shetty J."/>
            <person name="Shvartsbeyn A."/>
            <person name="Gebregeorgis E."/>
            <person name="Geer K."/>
            <person name="Tsegaye G."/>
            <person name="Malek J.A."/>
            <person name="Ayodeji B."/>
            <person name="Shatsman S."/>
            <person name="McLeod M.P."/>
            <person name="Smajs D."/>
            <person name="Howell J.K."/>
            <person name="Pal S."/>
            <person name="Amin A."/>
            <person name="Vashisth P."/>
            <person name="McNeill T.Z."/>
            <person name="Xiang Q."/>
            <person name="Sodergren E."/>
            <person name="Baca E."/>
            <person name="Weinstock G.M."/>
            <person name="Norris S.J."/>
            <person name="Fraser C.M."/>
            <person name="Paulsen I.T."/>
        </authorList>
    </citation>
    <scope>NUCLEOTIDE SEQUENCE [LARGE SCALE GENOMIC DNA]</scope>
    <source>
        <strain>ATCC 35405 / DSM 14222 / CIP 103919 / JCM 8153 / KCTC 15104</strain>
    </source>
</reference>
<proteinExistence type="inferred from homology"/>
<feature type="chain" id="PRO_0000108736" description="Ribosomal RNA small subunit methyltransferase H">
    <location>
        <begin position="1"/>
        <end position="315"/>
    </location>
</feature>
<feature type="binding site" evidence="1">
    <location>
        <begin position="34"/>
        <end position="36"/>
    </location>
    <ligand>
        <name>S-adenosyl-L-methionine</name>
        <dbReference type="ChEBI" id="CHEBI:59789"/>
    </ligand>
</feature>
<feature type="binding site" evidence="1">
    <location>
        <position position="53"/>
    </location>
    <ligand>
        <name>S-adenosyl-L-methionine</name>
        <dbReference type="ChEBI" id="CHEBI:59789"/>
    </ligand>
</feature>
<feature type="binding site" evidence="1">
    <location>
        <position position="100"/>
    </location>
    <ligand>
        <name>S-adenosyl-L-methionine</name>
        <dbReference type="ChEBI" id="CHEBI:59789"/>
    </ligand>
</feature>
<feature type="binding site" evidence="1">
    <location>
        <position position="107"/>
    </location>
    <ligand>
        <name>S-adenosyl-L-methionine</name>
        <dbReference type="ChEBI" id="CHEBI:59789"/>
    </ligand>
</feature>
<keyword id="KW-0963">Cytoplasm</keyword>
<keyword id="KW-0489">Methyltransferase</keyword>
<keyword id="KW-1185">Reference proteome</keyword>
<keyword id="KW-0698">rRNA processing</keyword>
<keyword id="KW-0949">S-adenosyl-L-methionine</keyword>
<keyword id="KW-0808">Transferase</keyword>